<gene>
    <name type="primary">mtbC2</name>
    <name type="ordered locus">MM_2961</name>
</gene>
<accession>P58980</accession>
<proteinExistence type="inferred from homology"/>
<dbReference type="EMBL" id="AE008384">
    <property type="protein sequence ID" value="AAM32657.1"/>
    <property type="status" value="ALT_INIT"/>
    <property type="molecule type" value="Genomic_DNA"/>
</dbReference>
<dbReference type="SMR" id="P58980"/>
<dbReference type="KEGG" id="mma:MM_2961"/>
<dbReference type="PATRIC" id="fig|192952.21.peg.3436"/>
<dbReference type="eggNOG" id="arCOG02030">
    <property type="taxonomic scope" value="Archaea"/>
</dbReference>
<dbReference type="HOGENOM" id="CLU_082102_1_0_2"/>
<dbReference type="UniPathway" id="UPA00644"/>
<dbReference type="Proteomes" id="UP000000595">
    <property type="component" value="Chromosome"/>
</dbReference>
<dbReference type="GO" id="GO:0005829">
    <property type="term" value="C:cytosol"/>
    <property type="evidence" value="ECO:0007669"/>
    <property type="project" value="TreeGrafter"/>
</dbReference>
<dbReference type="GO" id="GO:0031419">
    <property type="term" value="F:cobalamin binding"/>
    <property type="evidence" value="ECO:0007669"/>
    <property type="project" value="InterPro"/>
</dbReference>
<dbReference type="GO" id="GO:0050897">
    <property type="term" value="F:cobalt ion binding"/>
    <property type="evidence" value="ECO:0007669"/>
    <property type="project" value="InterPro"/>
</dbReference>
<dbReference type="GO" id="GO:0008705">
    <property type="term" value="F:methionine synthase activity"/>
    <property type="evidence" value="ECO:0007669"/>
    <property type="project" value="TreeGrafter"/>
</dbReference>
<dbReference type="GO" id="GO:0050667">
    <property type="term" value="P:homocysteine metabolic process"/>
    <property type="evidence" value="ECO:0007669"/>
    <property type="project" value="TreeGrafter"/>
</dbReference>
<dbReference type="GO" id="GO:0015948">
    <property type="term" value="P:methanogenesis"/>
    <property type="evidence" value="ECO:0007669"/>
    <property type="project" value="UniProtKB-KW"/>
</dbReference>
<dbReference type="GO" id="GO:0046653">
    <property type="term" value="P:tetrahydrofolate metabolic process"/>
    <property type="evidence" value="ECO:0007669"/>
    <property type="project" value="TreeGrafter"/>
</dbReference>
<dbReference type="CDD" id="cd02070">
    <property type="entry name" value="corrinoid_protein_B12-BD"/>
    <property type="match status" value="1"/>
</dbReference>
<dbReference type="FunFam" id="3.40.50.280:FF:000003">
    <property type="entry name" value="Dimethylamine methyltransferase corrinoid protein"/>
    <property type="match status" value="1"/>
</dbReference>
<dbReference type="FunFam" id="1.10.1240.10:FF:000004">
    <property type="entry name" value="Monomethylamine methyltransferase corrinoid protein"/>
    <property type="match status" value="1"/>
</dbReference>
<dbReference type="Gene3D" id="3.40.50.280">
    <property type="entry name" value="Cobalamin-binding domain"/>
    <property type="match status" value="1"/>
</dbReference>
<dbReference type="Gene3D" id="1.10.1240.10">
    <property type="entry name" value="Methionine synthase domain"/>
    <property type="match status" value="1"/>
</dbReference>
<dbReference type="InterPro" id="IPR003759">
    <property type="entry name" value="Cbl-bd_cap"/>
</dbReference>
<dbReference type="InterPro" id="IPR006158">
    <property type="entry name" value="Cobalamin-bd"/>
</dbReference>
<dbReference type="InterPro" id="IPR036724">
    <property type="entry name" value="Cobalamin-bd_sf"/>
</dbReference>
<dbReference type="InterPro" id="IPR012741">
    <property type="entry name" value="Corrinoid_p"/>
</dbReference>
<dbReference type="InterPro" id="IPR048095">
    <property type="entry name" value="Dimeth_corrin_MtbC"/>
</dbReference>
<dbReference type="InterPro" id="IPR050554">
    <property type="entry name" value="Met_Synthase/Corrinoid"/>
</dbReference>
<dbReference type="InterPro" id="IPR036594">
    <property type="entry name" value="Meth_synthase_dom"/>
</dbReference>
<dbReference type="NCBIfam" id="NF041607">
    <property type="entry name" value="dimeth_corrin_MtbC"/>
    <property type="match status" value="1"/>
</dbReference>
<dbReference type="NCBIfam" id="TIGR02370">
    <property type="entry name" value="pyl_corrinoid"/>
    <property type="match status" value="1"/>
</dbReference>
<dbReference type="PANTHER" id="PTHR45833">
    <property type="entry name" value="METHIONINE SYNTHASE"/>
    <property type="match status" value="1"/>
</dbReference>
<dbReference type="PANTHER" id="PTHR45833:SF1">
    <property type="entry name" value="METHIONINE SYNTHASE"/>
    <property type="match status" value="1"/>
</dbReference>
<dbReference type="Pfam" id="PF02310">
    <property type="entry name" value="B12-binding"/>
    <property type="match status" value="1"/>
</dbReference>
<dbReference type="Pfam" id="PF02607">
    <property type="entry name" value="B12-binding_2"/>
    <property type="match status" value="1"/>
</dbReference>
<dbReference type="SMART" id="SM01018">
    <property type="entry name" value="B12-binding_2"/>
    <property type="match status" value="1"/>
</dbReference>
<dbReference type="SUPFAM" id="SSF52242">
    <property type="entry name" value="Cobalamin (vitamin B12)-binding domain"/>
    <property type="match status" value="1"/>
</dbReference>
<dbReference type="SUPFAM" id="SSF47644">
    <property type="entry name" value="Methionine synthase domain"/>
    <property type="match status" value="1"/>
</dbReference>
<dbReference type="PROSITE" id="PS51332">
    <property type="entry name" value="B12_BINDING"/>
    <property type="match status" value="1"/>
</dbReference>
<dbReference type="PROSITE" id="PS51337">
    <property type="entry name" value="B12_BINDING_NTER"/>
    <property type="match status" value="1"/>
</dbReference>
<sequence>MATKEELIQELSDSIISCKKDAVLAAVEKAKQVMEPAEIIENGLAAGMNQVGVLFERGKLFLPHVMMAADAMTAGVKVLEADMPAGAATKKLGVIVNGTVEGDVHDIGKSIVSTMLQSAGFEVHDIGRDVPIKNFVEKAKEVNANMIGISALMTTTLQGQREVIELLKEEGLRSRVKVMVGGAPATQAWADKIGADCYAENASEAVAKAKELLL</sequence>
<name>MTBC2_METMA</name>
<feature type="chain" id="PRO_0000216479" description="Dimethylamine corrinoid protein 2">
    <location>
        <begin position="1"/>
        <end position="214"/>
    </location>
</feature>
<feature type="domain" description="B12-binding N-terminal" evidence="3">
    <location>
        <begin position="1"/>
        <end position="91"/>
    </location>
</feature>
<feature type="domain" description="B12-binding" evidence="2">
    <location>
        <begin position="92"/>
        <end position="214"/>
    </location>
</feature>
<feature type="binding site" description="axial binding residue" evidence="1">
    <location>
        <position position="105"/>
    </location>
    <ligand>
        <name>methylcob(III)alamin</name>
        <dbReference type="ChEBI" id="CHEBI:28115"/>
    </ligand>
    <ligandPart>
        <name>Co</name>
        <dbReference type="ChEBI" id="CHEBI:27638"/>
    </ligandPart>
</feature>
<organism>
    <name type="scientific">Methanosarcina mazei (strain ATCC BAA-159 / DSM 3647 / Goe1 / Go1 / JCM 11833 / OCM 88)</name>
    <name type="common">Methanosarcina frisia</name>
    <dbReference type="NCBI Taxonomy" id="192952"/>
    <lineage>
        <taxon>Archaea</taxon>
        <taxon>Methanobacteriati</taxon>
        <taxon>Methanobacteriota</taxon>
        <taxon>Stenosarchaea group</taxon>
        <taxon>Methanomicrobia</taxon>
        <taxon>Methanosarcinales</taxon>
        <taxon>Methanosarcinaceae</taxon>
        <taxon>Methanosarcina</taxon>
    </lineage>
</organism>
<evidence type="ECO:0000250" key="1"/>
<evidence type="ECO:0000255" key="2">
    <source>
        <dbReference type="PROSITE-ProRule" id="PRU00666"/>
    </source>
</evidence>
<evidence type="ECO:0000255" key="3">
    <source>
        <dbReference type="PROSITE-ProRule" id="PRU00667"/>
    </source>
</evidence>
<evidence type="ECO:0000305" key="4"/>
<comment type="function">
    <text evidence="1">Acts as a methyl group carrier between MtbB and MtbA.</text>
</comment>
<comment type="pathway">
    <text>One-carbon metabolism; methanogenesis from dimethylamine.</text>
</comment>
<comment type="similarity">
    <text evidence="4">Belongs to the methylamine corrinoid protein family.</text>
</comment>
<comment type="sequence caution" evidence="4">
    <conflict type="erroneous initiation">
        <sequence resource="EMBL-CDS" id="AAM32657"/>
    </conflict>
</comment>
<keyword id="KW-0170">Cobalt</keyword>
<keyword id="KW-0479">Metal-binding</keyword>
<keyword id="KW-0484">Methanogenesis</keyword>
<keyword id="KW-0677">Repeat</keyword>
<reference key="1">
    <citation type="journal article" date="2002" name="J. Mol. Microbiol. Biotechnol.">
        <title>The genome of Methanosarcina mazei: evidence for lateral gene transfer between Bacteria and Archaea.</title>
        <authorList>
            <person name="Deppenmeier U."/>
            <person name="Johann A."/>
            <person name="Hartsch T."/>
            <person name="Merkl R."/>
            <person name="Schmitz R.A."/>
            <person name="Martinez-Arias R."/>
            <person name="Henne A."/>
            <person name="Wiezer A."/>
            <person name="Baeumer S."/>
            <person name="Jacobi C."/>
            <person name="Brueggemann H."/>
            <person name="Lienard T."/>
            <person name="Christmann A."/>
            <person name="Boemecke M."/>
            <person name="Steckel S."/>
            <person name="Bhattacharyya A."/>
            <person name="Lykidis A."/>
            <person name="Overbeek R."/>
            <person name="Klenk H.-P."/>
            <person name="Gunsalus R.P."/>
            <person name="Fritz H.-J."/>
            <person name="Gottschalk G."/>
        </authorList>
    </citation>
    <scope>NUCLEOTIDE SEQUENCE [LARGE SCALE GENOMIC DNA]</scope>
    <source>
        <strain>ATCC BAA-159 / DSM 3647 / Goe1 / Go1 / JCM 11833 / OCM 88</strain>
    </source>
</reference>
<protein>
    <recommendedName>
        <fullName>Dimethylamine corrinoid protein 2</fullName>
    </recommendedName>
</protein>